<evidence type="ECO:0000250" key="1"/>
<evidence type="ECO:0000255" key="2"/>
<evidence type="ECO:0000255" key="3">
    <source>
        <dbReference type="PROSITE-ProRule" id="PRU00175"/>
    </source>
</evidence>
<evidence type="ECO:0000256" key="4">
    <source>
        <dbReference type="SAM" id="MobiDB-lite"/>
    </source>
</evidence>
<evidence type="ECO:0000269" key="5">
    <source>
    </source>
</evidence>
<evidence type="ECO:0000269" key="6">
    <source>
    </source>
</evidence>
<evidence type="ECO:0000269" key="7">
    <source>
    </source>
</evidence>
<evidence type="ECO:0000269" key="8">
    <source>
    </source>
</evidence>
<evidence type="ECO:0000303" key="9">
    <source>
    </source>
</evidence>
<evidence type="ECO:0000305" key="10"/>
<gene>
    <name type="primary">HUB1</name>
    <name type="synonym">BRE1A</name>
    <name evidence="9" type="synonym">RDO4</name>
    <name type="ordered locus">At2g44950/At2g44960</name>
    <name type="ORF">T13E15.24/T13E15.23</name>
    <name type="ORF">T14P1.25/T14P1.24</name>
</gene>
<sequence>MASTGEPDRKRRHFSSISPSEAAAAVKKQPFFWPSSEDKLDTAVLQFQNLKLSQKLEAQQVECSILEDKLSQIKEKQLPYNSSLKTVHKSWEKLTASVESCSVRVSDSSSGAHRFVNKEDGSSPAVKNDFINRLLETGATESSSSNICSNQMEENGVNTSSQMTQTLYNLVAATEDLRCLKDELYPTVLRTNLGKDLCGQLALSELESEIKSFRGDLDDVLVKFKSLSRELQSHRDADAKVRVDLKRIRGELEDEVVELQQCNGDLSALRAERDATAGAFFPVLSLGNKLATSDRERDKQRDLQDMETVLKELTVLASGRLQQLKNLHEERTKMLGKMSNLQNKSKSVRCISSSQACLSLKDQLEKSKEAVFQYMALLEKLQVEKDSIVWKEREINIKNELGDVSRKTSAVTDSRMASLDSEIQKQLDEKMRIKTRLGNISRERGRKEIFADMKALISSFPEEMSSMRSQLNNYKETAGGIHSLRADVQSLSGVLCRKTKEYEALQLRSADYASQLGDLNATVCDLKNSHEELKLFLDMYKRESTDARDIAEAKEQEYRAWAHVQSLKSSLDEQNLELRVKAANEAEAVSQQMLAAAEAEIADLRQKMDDCKRDVAKHSDILKSKHEEHGTYLSEIQTIGSAYEDIVPQNQQLLLQVTERDDYNIKLFLEGITSRQMQDTLLIDKYIMDKDIQQGSAYASFLSKKSSRIEDQLRFCTDQFQKLAEDKYQKSVSLENLQKKRADIGNGLEQARSRLEESHSKVEQSRLDYGALELELEIERFNRRRIEEEMEIAKKKVSRLRSLIEGSSAIQKLRQELSEFKEILKCKACNDRPKEVVITKCYHLFCNPCVQKLTGTRQKKCPTCSASFGPNDIKPIYI</sequence>
<comment type="function">
    <text evidence="5 6 7 8">E3 ubiquitin-protein ligase that monoubiquitinates H2B to form H2BK143ub1. H2BK143ub1 gives a specific tag for epigenetic transcriptional activation and is also prerequisite for H3K4me and maybe H3K79me. It thereby plays a central role in histone code and gene regulation. Forms a ubiquitin ligase complex in cooperation with the E2 enzyme UBC2/RAD6. Required for the regulation of flowering time and defense against necrotrophic fungal pathogens (PubMed:12535538, PubMed:17329563, PubMed:17329565, PubMed:19286969). Involved in the control of seed dormancy and germination (PubMed:21799800).</text>
</comment>
<comment type="catalytic activity">
    <reaction evidence="5 6">
        <text>S-ubiquitinyl-[E2 ubiquitin-conjugating enzyme]-L-cysteine + [acceptor protein]-L-lysine = [E2 ubiquitin-conjugating enzyme]-L-cysteine + N(6)-ubiquitinyl-[acceptor protein]-L-lysine.</text>
        <dbReference type="EC" id="2.3.2.27"/>
    </reaction>
</comment>
<comment type="pathway">
    <text>Protein modification; protein ubiquitination.</text>
</comment>
<comment type="subunit">
    <text evidence="1 7">May act as a tetramer consisting of two copies of HUB1 and two copies of HUB2 (By similarity). Interacts with MED21.</text>
</comment>
<comment type="interaction">
    <interactant intactId="EBI-2012188">
        <id>Q8RXD6</id>
    </interactant>
    <interactant intactId="EBI-2363348">
        <id>Q9FLI3</id>
        <label>AHG1</label>
    </interactant>
    <organismsDiffer>false</organismsDiffer>
    <experiments>3</experiments>
</comment>
<comment type="interaction">
    <interactant intactId="EBI-2012188">
        <id>Q8RXD6</id>
    </interactant>
    <interactant intactId="EBI-2026322">
        <id>Q9LEU7</id>
        <label>CIPK5</label>
    </interactant>
    <organismsDiffer>false</organismsDiffer>
    <experiments>3</experiments>
</comment>
<comment type="interaction">
    <interactant intactId="EBI-2012188">
        <id>Q8RXD6</id>
    </interactant>
    <interactant intactId="EBI-401198">
        <id>Q9SKK0</id>
        <label>EBF1</label>
    </interactant>
    <organismsDiffer>false</organismsDiffer>
    <experiments>3</experiments>
</comment>
<comment type="interaction">
    <interactant intactId="EBI-2012188">
        <id>Q8RXD6</id>
    </interactant>
    <interactant intactId="EBI-1390454">
        <id>Q9SU72</id>
        <label>EDS1</label>
    </interactant>
    <organismsDiffer>false</organismsDiffer>
    <experiments>4</experiments>
</comment>
<comment type="interaction">
    <interactant intactId="EBI-2012188">
        <id>Q8RXD6</id>
    </interactant>
    <interactant intactId="EBI-963606">
        <id>Q9LQT8</id>
        <label>GAI</label>
    </interactant>
    <organismsDiffer>false</organismsDiffer>
    <experiments>3</experiments>
</comment>
<comment type="interaction">
    <interactant intactId="EBI-2012188">
        <id>Q8RXD6</id>
    </interactant>
    <interactant intactId="EBI-446380">
        <id>Q9SQI2</id>
        <label>GI</label>
    </interactant>
    <organismsDiffer>false</organismsDiffer>
    <experiments>3</experiments>
</comment>
<comment type="interaction">
    <interactant intactId="EBI-2012188">
        <id>Q8RXD6</id>
    </interactant>
    <interactant intactId="EBI-4457746">
        <id>Q9LV52</id>
        <label>HSFC1</label>
    </interactant>
    <organismsDiffer>false</organismsDiffer>
    <experiments>3</experiments>
</comment>
<comment type="interaction">
    <interactant intactId="EBI-2012188">
        <id>Q8RXD6</id>
    </interactant>
    <interactant intactId="EBI-2012188">
        <id>Q8RXD6</id>
        <label>HUB1</label>
    </interactant>
    <organismsDiffer>false</organismsDiffer>
    <experiments>5</experiments>
</comment>
<comment type="interaction">
    <interactant intactId="EBI-2012188">
        <id>Q8RXD6</id>
    </interactant>
    <interactant intactId="EBI-530486">
        <id>P46639</id>
        <label>KNAT1</label>
    </interactant>
    <organismsDiffer>false</organismsDiffer>
    <experiments>5</experiments>
</comment>
<comment type="interaction">
    <interactant intactId="EBI-2012188">
        <id>Q8RXD6</id>
    </interactant>
    <interactant intactId="EBI-4424076">
        <id>Q9FIR9</id>
        <label>LSU2</label>
    </interactant>
    <organismsDiffer>false</organismsDiffer>
    <experiments>3</experiments>
</comment>
<comment type="interaction">
    <interactant intactId="EBI-2012188">
        <id>Q8RXD6</id>
    </interactant>
    <interactant intactId="EBI-1386244">
        <id>Q6ID77</id>
        <label>MED11</label>
    </interactant>
    <organismsDiffer>false</organismsDiffer>
    <experiments>2</experiments>
</comment>
<comment type="interaction">
    <interactant intactId="EBI-2012188">
        <id>Q8RXD6</id>
    </interactant>
    <interactant intactId="EBI-25515433">
        <id>O80959</id>
        <label>PLP6</label>
    </interactant>
    <organismsDiffer>false</organismsDiffer>
    <experiments>3</experiments>
</comment>
<comment type="interaction">
    <interactant intactId="EBI-2012188">
        <id>Q8RXD6</id>
    </interactant>
    <interactant intactId="EBI-1998055">
        <id>Q1H5E9</id>
        <label>PRDA1</label>
    </interactant>
    <organismsDiffer>false</organismsDiffer>
    <experiments>3</experiments>
</comment>
<comment type="subcellular location">
    <subcellularLocation>
        <location evidence="5 7">Nucleus</location>
    </subcellularLocation>
</comment>
<comment type="tissue specificity">
    <text evidence="5 6">Ubiquitously expressed.</text>
</comment>
<comment type="developmental stage">
    <text evidence="6">Constant throughout the cell cycle.</text>
</comment>
<comment type="induction">
    <text evidence="7">By infection with fungal pathogens.</text>
</comment>
<comment type="domain">
    <text evidence="1">The RING-type zinc finger domain mediates binding to an E2 ubiquitin-conjugating enzyme.</text>
</comment>
<comment type="disruption phenotype">
    <text evidence="5 8">Plants have reduced seed dormancy and several pleiotropic phenotypes, including alterations in leaf color, plant architecture and flower morphology.</text>
</comment>
<comment type="miscellaneous">
    <text>HUB1 and HUB2 are involved in the same processes, but are weakly or not redundant.</text>
</comment>
<comment type="similarity">
    <text evidence="10">Belongs to the BRE1 family.</text>
</comment>
<comment type="sequence caution" evidence="10">
    <conflict type="erroneous gene model prediction">
        <sequence resource="EMBL-CDS" id="AAM14833"/>
    </conflict>
    <text>Was originally thought to correspond to two different genes At2g44950 and At2g44960.</text>
</comment>
<comment type="sequence caution" evidence="10">
    <conflict type="erroneous gene model prediction">
        <sequence resource="EMBL-CDS" id="AAM14834"/>
    </conflict>
    <text>Was originally thought to correspond to two different genes At2g44950 and At2g44960.</text>
</comment>
<keyword id="KW-0156">Chromatin regulator</keyword>
<keyword id="KW-0175">Coiled coil</keyword>
<keyword id="KW-0479">Metal-binding</keyword>
<keyword id="KW-0539">Nucleus</keyword>
<keyword id="KW-1185">Reference proteome</keyword>
<keyword id="KW-0808">Transferase</keyword>
<keyword id="KW-0833">Ubl conjugation pathway</keyword>
<keyword id="KW-0862">Zinc</keyword>
<keyword id="KW-0863">Zinc-finger</keyword>
<name>BRE1A_ARATH</name>
<accession>Q8RXD6</accession>
<accession>O22156</accession>
<accession>O22157</accession>
<dbReference type="EC" id="2.3.2.27" evidence="5 6"/>
<dbReference type="EMBL" id="AC002388">
    <property type="protein sequence ID" value="AAM14833.1"/>
    <property type="status" value="ALT_SEQ"/>
    <property type="molecule type" value="Genomic_DNA"/>
</dbReference>
<dbReference type="EMBL" id="AC002388">
    <property type="protein sequence ID" value="AAM14834.1"/>
    <property type="status" value="ALT_SEQ"/>
    <property type="molecule type" value="Genomic_DNA"/>
</dbReference>
<dbReference type="EMBL" id="CP002685">
    <property type="protein sequence ID" value="AEC10489.1"/>
    <property type="molecule type" value="Genomic_DNA"/>
</dbReference>
<dbReference type="EMBL" id="BT010360">
    <property type="protein sequence ID" value="AAQ56803.1"/>
    <property type="molecule type" value="mRNA"/>
</dbReference>
<dbReference type="EMBL" id="AY081322">
    <property type="protein sequence ID" value="AAL91211.1"/>
    <property type="molecule type" value="mRNA"/>
</dbReference>
<dbReference type="PIR" id="T00397">
    <property type="entry name" value="T00397"/>
</dbReference>
<dbReference type="PIR" id="T00398">
    <property type="entry name" value="T00398"/>
</dbReference>
<dbReference type="RefSeq" id="NP_182022.2">
    <property type="nucleotide sequence ID" value="NM_130060.4"/>
</dbReference>
<dbReference type="SMR" id="Q8RXD6"/>
<dbReference type="BioGRID" id="4440">
    <property type="interactions" value="49"/>
</dbReference>
<dbReference type="FunCoup" id="Q8RXD6">
    <property type="interactions" value="4527"/>
</dbReference>
<dbReference type="IntAct" id="Q8RXD6">
    <property type="interactions" value="48"/>
</dbReference>
<dbReference type="STRING" id="3702.Q8RXD6"/>
<dbReference type="iPTMnet" id="Q8RXD6"/>
<dbReference type="PaxDb" id="3702-AT2G44950.1"/>
<dbReference type="ProteomicsDB" id="240477"/>
<dbReference type="EnsemblPlants" id="AT2G44950.1">
    <property type="protein sequence ID" value="AT2G44950.1"/>
    <property type="gene ID" value="AT2G44950"/>
</dbReference>
<dbReference type="GeneID" id="819104"/>
<dbReference type="Gramene" id="AT2G44950.1">
    <property type="protein sequence ID" value="AT2G44950.1"/>
    <property type="gene ID" value="AT2G44950"/>
</dbReference>
<dbReference type="KEGG" id="ath:AT2G44950"/>
<dbReference type="Araport" id="AT2G44950"/>
<dbReference type="TAIR" id="AT2G44950">
    <property type="gene designation" value="HUB1"/>
</dbReference>
<dbReference type="eggNOG" id="KOG0978">
    <property type="taxonomic scope" value="Eukaryota"/>
</dbReference>
<dbReference type="HOGENOM" id="CLU_002640_1_0_1"/>
<dbReference type="InParanoid" id="Q8RXD6"/>
<dbReference type="OMA" id="THIEIMT"/>
<dbReference type="OrthoDB" id="10266039at2759"/>
<dbReference type="PhylomeDB" id="Q8RXD6"/>
<dbReference type="UniPathway" id="UPA00143"/>
<dbReference type="PRO" id="PR:Q8RXD6"/>
<dbReference type="Proteomes" id="UP000006548">
    <property type="component" value="Chromosome 2"/>
</dbReference>
<dbReference type="ExpressionAtlas" id="Q8RXD6">
    <property type="expression patterns" value="baseline and differential"/>
</dbReference>
<dbReference type="GO" id="GO:0033503">
    <property type="term" value="C:HULC complex"/>
    <property type="evidence" value="ECO:0000318"/>
    <property type="project" value="GO_Central"/>
</dbReference>
<dbReference type="GO" id="GO:0005739">
    <property type="term" value="C:mitochondrion"/>
    <property type="evidence" value="ECO:0007005"/>
    <property type="project" value="TAIR"/>
</dbReference>
<dbReference type="GO" id="GO:0005634">
    <property type="term" value="C:nucleus"/>
    <property type="evidence" value="ECO:0000314"/>
    <property type="project" value="UniProtKB"/>
</dbReference>
<dbReference type="GO" id="GO:0042802">
    <property type="term" value="F:identical protein binding"/>
    <property type="evidence" value="ECO:0000353"/>
    <property type="project" value="IntAct"/>
</dbReference>
<dbReference type="GO" id="GO:0042803">
    <property type="term" value="F:protein homodimerization activity"/>
    <property type="evidence" value="ECO:0000353"/>
    <property type="project" value="TAIR"/>
</dbReference>
<dbReference type="GO" id="GO:0061630">
    <property type="term" value="F:ubiquitin protein ligase activity"/>
    <property type="evidence" value="ECO:0000318"/>
    <property type="project" value="GO_Central"/>
</dbReference>
<dbReference type="GO" id="GO:0004842">
    <property type="term" value="F:ubiquitin-protein transferase activity"/>
    <property type="evidence" value="ECO:0000314"/>
    <property type="project" value="TAIR"/>
</dbReference>
<dbReference type="GO" id="GO:0008270">
    <property type="term" value="F:zinc ion binding"/>
    <property type="evidence" value="ECO:0007669"/>
    <property type="project" value="UniProtKB-KW"/>
</dbReference>
<dbReference type="GO" id="GO:0051301">
    <property type="term" value="P:cell division"/>
    <property type="evidence" value="ECO:0000315"/>
    <property type="project" value="TAIR"/>
</dbReference>
<dbReference type="GO" id="GO:0006325">
    <property type="term" value="P:chromatin organization"/>
    <property type="evidence" value="ECO:0007669"/>
    <property type="project" value="UniProtKB-KW"/>
</dbReference>
<dbReference type="GO" id="GO:0050832">
    <property type="term" value="P:defense response to fungus"/>
    <property type="evidence" value="ECO:0000315"/>
    <property type="project" value="TAIR"/>
</dbReference>
<dbReference type="GO" id="GO:0045087">
    <property type="term" value="P:innate immune response"/>
    <property type="evidence" value="ECO:0000316"/>
    <property type="project" value="TAIR"/>
</dbReference>
<dbReference type="GO" id="GO:0009965">
    <property type="term" value="P:leaf morphogenesis"/>
    <property type="evidence" value="ECO:0000315"/>
    <property type="project" value="TAIR"/>
</dbReference>
<dbReference type="GO" id="GO:0051781">
    <property type="term" value="P:positive regulation of cell division"/>
    <property type="evidence" value="ECO:0000315"/>
    <property type="project" value="TAIR"/>
</dbReference>
<dbReference type="GO" id="GO:0006513">
    <property type="term" value="P:protein monoubiquitination"/>
    <property type="evidence" value="ECO:0000314"/>
    <property type="project" value="TAIR"/>
</dbReference>
<dbReference type="GO" id="GO:0010389">
    <property type="term" value="P:regulation of G2/M transition of mitotic cell cycle"/>
    <property type="evidence" value="ECO:0000315"/>
    <property type="project" value="TAIR"/>
</dbReference>
<dbReference type="GO" id="GO:0010162">
    <property type="term" value="P:seed dormancy process"/>
    <property type="evidence" value="ECO:0000315"/>
    <property type="project" value="TAIR"/>
</dbReference>
<dbReference type="GO" id="GO:0010228">
    <property type="term" value="P:vegetative to reproductive phase transition of meristem"/>
    <property type="evidence" value="ECO:0000315"/>
    <property type="project" value="TAIR"/>
</dbReference>
<dbReference type="CDD" id="cd16499">
    <property type="entry name" value="RING-HC_Bre1-like"/>
    <property type="match status" value="1"/>
</dbReference>
<dbReference type="FunFam" id="3.30.40.10:FF:000414">
    <property type="entry name" value="E3 ubiquitin protein ligase"/>
    <property type="match status" value="1"/>
</dbReference>
<dbReference type="Gene3D" id="3.30.40.10">
    <property type="entry name" value="Zinc/RING finger domain, C3HC4 (zinc finger)"/>
    <property type="match status" value="1"/>
</dbReference>
<dbReference type="InterPro" id="IPR013956">
    <property type="entry name" value="E3_ubiquit_lig_Bre1"/>
</dbReference>
<dbReference type="InterPro" id="IPR001841">
    <property type="entry name" value="Znf_RING"/>
</dbReference>
<dbReference type="InterPro" id="IPR013083">
    <property type="entry name" value="Znf_RING/FYVE/PHD"/>
</dbReference>
<dbReference type="InterPro" id="IPR017907">
    <property type="entry name" value="Znf_RING_CS"/>
</dbReference>
<dbReference type="PANTHER" id="PTHR23163:SF0">
    <property type="entry name" value="E3 UBIQUITIN-PROTEIN LIGASE BRE1"/>
    <property type="match status" value="1"/>
</dbReference>
<dbReference type="PANTHER" id="PTHR23163">
    <property type="entry name" value="RING FINGER PROTEIN-RELATED"/>
    <property type="match status" value="1"/>
</dbReference>
<dbReference type="Pfam" id="PF13920">
    <property type="entry name" value="zf-C3HC4_3"/>
    <property type="match status" value="1"/>
</dbReference>
<dbReference type="SMART" id="SM00184">
    <property type="entry name" value="RING"/>
    <property type="match status" value="1"/>
</dbReference>
<dbReference type="SUPFAM" id="SSF57850">
    <property type="entry name" value="RING/U-box"/>
    <property type="match status" value="1"/>
</dbReference>
<dbReference type="PROSITE" id="PS00518">
    <property type="entry name" value="ZF_RING_1"/>
    <property type="match status" value="1"/>
</dbReference>
<dbReference type="PROSITE" id="PS50089">
    <property type="entry name" value="ZF_RING_2"/>
    <property type="match status" value="1"/>
</dbReference>
<organism>
    <name type="scientific">Arabidopsis thaliana</name>
    <name type="common">Mouse-ear cress</name>
    <dbReference type="NCBI Taxonomy" id="3702"/>
    <lineage>
        <taxon>Eukaryota</taxon>
        <taxon>Viridiplantae</taxon>
        <taxon>Streptophyta</taxon>
        <taxon>Embryophyta</taxon>
        <taxon>Tracheophyta</taxon>
        <taxon>Spermatophyta</taxon>
        <taxon>Magnoliopsida</taxon>
        <taxon>eudicotyledons</taxon>
        <taxon>Gunneridae</taxon>
        <taxon>Pentapetalae</taxon>
        <taxon>rosids</taxon>
        <taxon>malvids</taxon>
        <taxon>Brassicales</taxon>
        <taxon>Brassicaceae</taxon>
        <taxon>Camelineae</taxon>
        <taxon>Arabidopsis</taxon>
    </lineage>
</organism>
<reference key="1">
    <citation type="journal article" date="1999" name="Nature">
        <title>Sequence and analysis of chromosome 2 of the plant Arabidopsis thaliana.</title>
        <authorList>
            <person name="Lin X."/>
            <person name="Kaul S."/>
            <person name="Rounsley S.D."/>
            <person name="Shea T.P."/>
            <person name="Benito M.-I."/>
            <person name="Town C.D."/>
            <person name="Fujii C.Y."/>
            <person name="Mason T.M."/>
            <person name="Bowman C.L."/>
            <person name="Barnstead M.E."/>
            <person name="Feldblyum T.V."/>
            <person name="Buell C.R."/>
            <person name="Ketchum K.A."/>
            <person name="Lee J.J."/>
            <person name="Ronning C.M."/>
            <person name="Koo H.L."/>
            <person name="Moffat K.S."/>
            <person name="Cronin L.A."/>
            <person name="Shen M."/>
            <person name="Pai G."/>
            <person name="Van Aken S."/>
            <person name="Umayam L."/>
            <person name="Tallon L.J."/>
            <person name="Gill J.E."/>
            <person name="Adams M.D."/>
            <person name="Carrera A.J."/>
            <person name="Creasy T.H."/>
            <person name="Goodman H.M."/>
            <person name="Somerville C.R."/>
            <person name="Copenhaver G.P."/>
            <person name="Preuss D."/>
            <person name="Nierman W.C."/>
            <person name="White O."/>
            <person name="Eisen J.A."/>
            <person name="Salzberg S.L."/>
            <person name="Fraser C.M."/>
            <person name="Venter J.C."/>
        </authorList>
    </citation>
    <scope>NUCLEOTIDE SEQUENCE [LARGE SCALE GENOMIC DNA]</scope>
    <source>
        <strain>cv. Columbia</strain>
    </source>
</reference>
<reference key="2">
    <citation type="journal article" date="2017" name="Plant J.">
        <title>Araport11: a complete reannotation of the Arabidopsis thaliana reference genome.</title>
        <authorList>
            <person name="Cheng C.Y."/>
            <person name="Krishnakumar V."/>
            <person name="Chan A.P."/>
            <person name="Thibaud-Nissen F."/>
            <person name="Schobel S."/>
            <person name="Town C.D."/>
        </authorList>
    </citation>
    <scope>GENOME REANNOTATION</scope>
    <source>
        <strain>cv. Columbia</strain>
    </source>
</reference>
<reference key="3">
    <citation type="journal article" date="2003" name="Science">
        <title>Empirical analysis of transcriptional activity in the Arabidopsis genome.</title>
        <authorList>
            <person name="Yamada K."/>
            <person name="Lim J."/>
            <person name="Dale J.M."/>
            <person name="Chen H."/>
            <person name="Shinn P."/>
            <person name="Palm C.J."/>
            <person name="Southwick A.M."/>
            <person name="Wu H.C."/>
            <person name="Kim C.J."/>
            <person name="Nguyen M."/>
            <person name="Pham P.K."/>
            <person name="Cheuk R.F."/>
            <person name="Karlin-Newmann G."/>
            <person name="Liu S.X."/>
            <person name="Lam B."/>
            <person name="Sakano H."/>
            <person name="Wu T."/>
            <person name="Yu G."/>
            <person name="Miranda M."/>
            <person name="Quach H.L."/>
            <person name="Tripp M."/>
            <person name="Chang C.H."/>
            <person name="Lee J.M."/>
            <person name="Toriumi M.J."/>
            <person name="Chan M.M."/>
            <person name="Tang C.C."/>
            <person name="Onodera C.S."/>
            <person name="Deng J.M."/>
            <person name="Akiyama K."/>
            <person name="Ansari Y."/>
            <person name="Arakawa T."/>
            <person name="Banh J."/>
            <person name="Banno F."/>
            <person name="Bowser L."/>
            <person name="Brooks S.Y."/>
            <person name="Carninci P."/>
            <person name="Chao Q."/>
            <person name="Choy N."/>
            <person name="Enju A."/>
            <person name="Goldsmith A.D."/>
            <person name="Gurjal M."/>
            <person name="Hansen N.F."/>
            <person name="Hayashizaki Y."/>
            <person name="Johnson-Hopson C."/>
            <person name="Hsuan V.W."/>
            <person name="Iida K."/>
            <person name="Karnes M."/>
            <person name="Khan S."/>
            <person name="Koesema E."/>
            <person name="Ishida J."/>
            <person name="Jiang P.X."/>
            <person name="Jones T."/>
            <person name="Kawai J."/>
            <person name="Kamiya A."/>
            <person name="Meyers C."/>
            <person name="Nakajima M."/>
            <person name="Narusaka M."/>
            <person name="Seki M."/>
            <person name="Sakurai T."/>
            <person name="Satou M."/>
            <person name="Tamse R."/>
            <person name="Vaysberg M."/>
            <person name="Wallender E.K."/>
            <person name="Wong C."/>
            <person name="Yamamura Y."/>
            <person name="Yuan S."/>
            <person name="Shinozaki K."/>
            <person name="Davis R.W."/>
            <person name="Theologis A."/>
            <person name="Ecker J.R."/>
        </authorList>
    </citation>
    <scope>NUCLEOTIDE SEQUENCE [LARGE SCALE MRNA]</scope>
    <source>
        <strain>cv. Columbia</strain>
    </source>
</reference>
<reference key="4">
    <citation type="journal article" date="2003" name="Mol. Cell">
        <title>A conserved RING finger protein required for histone H2B monoubiquitination and cell size control.</title>
        <authorList>
            <person name="Hwang W.W."/>
            <person name="Venkatasubrahmanyam S."/>
            <person name="Ianculescu A.G."/>
            <person name="Tong A."/>
            <person name="Boone C."/>
            <person name="Madhani H.D."/>
        </authorList>
    </citation>
    <scope>IDENTIFICATION</scope>
</reference>
<reference key="5">
    <citation type="journal article" date="2007" name="Plant Cell">
        <title>The Arabidopsis thaliana homolog of yeast BRE1 has a function in cell cycle regulation during early leaf and root growth.</title>
        <authorList>
            <person name="Fleury D."/>
            <person name="Himanen K."/>
            <person name="Cnops G."/>
            <person name="Nelissen H."/>
            <person name="Boccardi T.M."/>
            <person name="Maere S."/>
            <person name="Beemster G.T.S."/>
            <person name="Neyt P."/>
            <person name="Anami S."/>
            <person name="Robles P."/>
            <person name="Micol J.L."/>
            <person name="Inze D."/>
            <person name="Van Lijsebettens M."/>
        </authorList>
    </citation>
    <scope>FUNCTION</scope>
    <scope>CATALYTIC ACTIVITY</scope>
    <scope>MUTAGENESIS OF 712-GLN--ILE-878</scope>
    <scope>DEVELOPMENTAL STAGE</scope>
    <scope>TISSUE SPECIFICITY</scope>
</reference>
<reference key="6">
    <citation type="journal article" date="2007" name="Plant Cell">
        <title>The absence of histone H2B monoubiquitination in the Arabidopsis hub1 (rdo4) mutant reveals a role for chromatin remodeling in seed dormancy.</title>
        <authorList>
            <person name="Liu Y."/>
            <person name="Koornneef M."/>
            <person name="Soppe W.J.J."/>
        </authorList>
    </citation>
    <scope>FUNCTION</scope>
    <scope>CATALYTIC ACTIVITY</scope>
    <scope>TISSUE SPECIFICITY</scope>
    <scope>SUBCELLULAR LOCATION</scope>
    <scope>DISRUPTION PHENOTYPE</scope>
</reference>
<reference key="7">
    <citation type="journal article" date="2009" name="Plant Cell">
        <title>HISTONE MONOUBIQUITINATION1 interacts with a subunit of the mediator complex and regulates defense against necrotrophic fungal pathogens in Arabidopsis.</title>
        <authorList>
            <person name="Dhawan R."/>
            <person name="Luo H."/>
            <person name="Foerster A.M."/>
            <person name="Abuqamar S."/>
            <person name="Du H.N."/>
            <person name="Briggs S.D."/>
            <person name="Mittelsten Scheid O."/>
            <person name="Mengiste T."/>
        </authorList>
    </citation>
    <scope>FUNCTION</scope>
    <scope>INTERACTION WITH MED21</scope>
    <scope>SUBCELLULAR LOCATION</scope>
    <scope>INDUCTION</scope>
</reference>
<reference key="8">
    <citation type="journal article" date="2011" name="PLoS ONE">
        <title>Identification of the Arabidopsis REDUCED DORMANCY 2 gene uncovers a role for the polymerase associated factor 1 complex in seed dormancy.</title>
        <authorList>
            <person name="Liu Y."/>
            <person name="Geyer R."/>
            <person name="van Zanten M."/>
            <person name="Carles A."/>
            <person name="Li Y."/>
            <person name="Horold A."/>
            <person name="van Nocker S."/>
            <person name="Soppe W.J."/>
        </authorList>
    </citation>
    <scope>FUNCTION</scope>
    <scope>DISRUPTION PHENOTYPE</scope>
</reference>
<proteinExistence type="evidence at protein level"/>
<feature type="chain" id="PRO_0000293108" description="E3 ubiquitin-protein ligase BRE1-like 1">
    <location>
        <begin position="1"/>
        <end position="878"/>
    </location>
</feature>
<feature type="zinc finger region" description="RING-type" evidence="3">
    <location>
        <begin position="826"/>
        <end position="865"/>
    </location>
</feature>
<feature type="region of interest" description="Disordered" evidence="4">
    <location>
        <begin position="1"/>
        <end position="21"/>
    </location>
</feature>
<feature type="coiled-coil region" evidence="2">
    <location>
        <begin position="48"/>
        <end position="76"/>
    </location>
</feature>
<feature type="coiled-coil region" evidence="2">
    <location>
        <begin position="200"/>
        <end position="261"/>
    </location>
</feature>
<feature type="coiled-coil region" evidence="2">
    <location>
        <begin position="293"/>
        <end position="382"/>
    </location>
</feature>
<feature type="coiled-coil region" evidence="2">
    <location>
        <begin position="537"/>
        <end position="624"/>
    </location>
</feature>
<feature type="mutagenesis site" description="In hub1-1/ang4-1; loss of function." evidence="6">
    <location>
        <begin position="712"/>
        <end position="878"/>
    </location>
</feature>
<protein>
    <recommendedName>
        <fullName>E3 ubiquitin-protein ligase BRE1-like 1</fullName>
        <shortName>AtBRE1</shortName>
        <ecNumber evidence="5 6">2.3.2.27</ecNumber>
    </recommendedName>
    <alternativeName>
        <fullName>Protein HISTONE MONOUBIQUITINATION 1</fullName>
        <shortName>AtHUB1</shortName>
    </alternativeName>
    <alternativeName>
        <fullName evidence="9">Protein REDUCED DORMANCY 4</fullName>
    </alternativeName>
    <alternativeName>
        <fullName evidence="10">RING-type E3 ubiquitin transferase BRE1-like 1</fullName>
    </alternativeName>
</protein>